<name>SECB_MARMS</name>
<dbReference type="EMBL" id="CP000749">
    <property type="protein sequence ID" value="ABR69649.1"/>
    <property type="molecule type" value="Genomic_DNA"/>
</dbReference>
<dbReference type="SMR" id="A6VT70"/>
<dbReference type="STRING" id="400668.Mmwyl1_0715"/>
<dbReference type="KEGG" id="mmw:Mmwyl1_0715"/>
<dbReference type="eggNOG" id="COG1952">
    <property type="taxonomic scope" value="Bacteria"/>
</dbReference>
<dbReference type="HOGENOM" id="CLU_111574_1_0_6"/>
<dbReference type="OrthoDB" id="9795145at2"/>
<dbReference type="GO" id="GO:0005737">
    <property type="term" value="C:cytoplasm"/>
    <property type="evidence" value="ECO:0007669"/>
    <property type="project" value="UniProtKB-SubCell"/>
</dbReference>
<dbReference type="GO" id="GO:0051082">
    <property type="term" value="F:unfolded protein binding"/>
    <property type="evidence" value="ECO:0007669"/>
    <property type="project" value="InterPro"/>
</dbReference>
<dbReference type="GO" id="GO:0006457">
    <property type="term" value="P:protein folding"/>
    <property type="evidence" value="ECO:0007669"/>
    <property type="project" value="UniProtKB-UniRule"/>
</dbReference>
<dbReference type="GO" id="GO:0051262">
    <property type="term" value="P:protein tetramerization"/>
    <property type="evidence" value="ECO:0007669"/>
    <property type="project" value="InterPro"/>
</dbReference>
<dbReference type="GO" id="GO:0015031">
    <property type="term" value="P:protein transport"/>
    <property type="evidence" value="ECO:0007669"/>
    <property type="project" value="UniProtKB-UniRule"/>
</dbReference>
<dbReference type="Gene3D" id="3.10.420.10">
    <property type="entry name" value="SecB-like"/>
    <property type="match status" value="1"/>
</dbReference>
<dbReference type="HAMAP" id="MF_00821">
    <property type="entry name" value="SecB"/>
    <property type="match status" value="1"/>
</dbReference>
<dbReference type="InterPro" id="IPR003708">
    <property type="entry name" value="SecB"/>
</dbReference>
<dbReference type="InterPro" id="IPR035958">
    <property type="entry name" value="SecB-like_sf"/>
</dbReference>
<dbReference type="NCBIfam" id="NF004393">
    <property type="entry name" value="PRK05751.1-4"/>
    <property type="match status" value="1"/>
</dbReference>
<dbReference type="NCBIfam" id="TIGR00809">
    <property type="entry name" value="secB"/>
    <property type="match status" value="1"/>
</dbReference>
<dbReference type="PANTHER" id="PTHR36918">
    <property type="match status" value="1"/>
</dbReference>
<dbReference type="PANTHER" id="PTHR36918:SF1">
    <property type="entry name" value="PROTEIN-EXPORT PROTEIN SECB"/>
    <property type="match status" value="1"/>
</dbReference>
<dbReference type="Pfam" id="PF02556">
    <property type="entry name" value="SecB"/>
    <property type="match status" value="1"/>
</dbReference>
<dbReference type="PRINTS" id="PR01594">
    <property type="entry name" value="SECBCHAPRONE"/>
</dbReference>
<dbReference type="SUPFAM" id="SSF54611">
    <property type="entry name" value="SecB-like"/>
    <property type="match status" value="1"/>
</dbReference>
<comment type="function">
    <text evidence="1">One of the proteins required for the normal export of preproteins out of the cell cytoplasm. It is a molecular chaperone that binds to a subset of precursor proteins, maintaining them in a translocation-competent state. It also specifically binds to its receptor SecA.</text>
</comment>
<comment type="subunit">
    <text evidence="1">Homotetramer, a dimer of dimers. One homotetramer interacts with 1 SecA dimer.</text>
</comment>
<comment type="subcellular location">
    <subcellularLocation>
        <location evidence="1">Cytoplasm</location>
    </subcellularLocation>
</comment>
<comment type="similarity">
    <text evidence="1">Belongs to the SecB family.</text>
</comment>
<organism>
    <name type="scientific">Marinomonas sp. (strain MWYL1)</name>
    <dbReference type="NCBI Taxonomy" id="400668"/>
    <lineage>
        <taxon>Bacteria</taxon>
        <taxon>Pseudomonadati</taxon>
        <taxon>Pseudomonadota</taxon>
        <taxon>Gammaproteobacteria</taxon>
        <taxon>Oceanospirillales</taxon>
        <taxon>Oceanospirillaceae</taxon>
        <taxon>Marinomonas</taxon>
    </lineage>
</organism>
<sequence>MSDTAETQEAQTQEAQTPQLSMQRVFLKDISFESPRSPMIFQEEWKPEVGLELNTKSRQVGENVYEVVLEITVTVKNNGNTGYLVQVQQGGLFVISGLDDQQLHHALGAFCPATLFPYARENIDAVVVKGSFPAIMLAPINFDALYIESLQKQQAETTQ</sequence>
<accession>A6VT70</accession>
<keyword id="KW-0143">Chaperone</keyword>
<keyword id="KW-0963">Cytoplasm</keyword>
<keyword id="KW-0653">Protein transport</keyword>
<keyword id="KW-0811">Translocation</keyword>
<keyword id="KW-0813">Transport</keyword>
<gene>
    <name evidence="1" type="primary">secB</name>
    <name type="ordered locus">Mmwyl1_0715</name>
</gene>
<proteinExistence type="inferred from homology"/>
<feature type="chain" id="PRO_1000083860" description="Protein-export protein SecB">
    <location>
        <begin position="1"/>
        <end position="159"/>
    </location>
</feature>
<evidence type="ECO:0000255" key="1">
    <source>
        <dbReference type="HAMAP-Rule" id="MF_00821"/>
    </source>
</evidence>
<reference key="1">
    <citation type="submission" date="2007-06" db="EMBL/GenBank/DDBJ databases">
        <title>Complete sequence of Marinomonas sp. MWYL1.</title>
        <authorList>
            <consortium name="US DOE Joint Genome Institute"/>
            <person name="Copeland A."/>
            <person name="Lucas S."/>
            <person name="Lapidus A."/>
            <person name="Barry K."/>
            <person name="Glavina del Rio T."/>
            <person name="Dalin E."/>
            <person name="Tice H."/>
            <person name="Pitluck S."/>
            <person name="Kiss H."/>
            <person name="Brettin T."/>
            <person name="Bruce D."/>
            <person name="Detter J.C."/>
            <person name="Han C."/>
            <person name="Schmutz J."/>
            <person name="Larimer F."/>
            <person name="Land M."/>
            <person name="Hauser L."/>
            <person name="Kyrpides N."/>
            <person name="Kim E."/>
            <person name="Johnston A.W.B."/>
            <person name="Todd J.D."/>
            <person name="Rogers R."/>
            <person name="Wexler M."/>
            <person name="Bond P.L."/>
            <person name="Li Y."/>
            <person name="Richardson P."/>
        </authorList>
    </citation>
    <scope>NUCLEOTIDE SEQUENCE [LARGE SCALE GENOMIC DNA]</scope>
    <source>
        <strain>MWYL1</strain>
    </source>
</reference>
<protein>
    <recommendedName>
        <fullName evidence="1">Protein-export protein SecB</fullName>
    </recommendedName>
</protein>